<protein>
    <recommendedName>
        <fullName evidence="1">UPF0235 protein Spro_4033</fullName>
    </recommendedName>
</protein>
<proteinExistence type="inferred from homology"/>
<comment type="similarity">
    <text evidence="1">Belongs to the UPF0235 family.</text>
</comment>
<name>Y4033_SERP5</name>
<reference key="1">
    <citation type="submission" date="2007-09" db="EMBL/GenBank/DDBJ databases">
        <title>Complete sequence of chromosome of Serratia proteamaculans 568.</title>
        <authorList>
            <consortium name="US DOE Joint Genome Institute"/>
            <person name="Copeland A."/>
            <person name="Lucas S."/>
            <person name="Lapidus A."/>
            <person name="Barry K."/>
            <person name="Glavina del Rio T."/>
            <person name="Dalin E."/>
            <person name="Tice H."/>
            <person name="Pitluck S."/>
            <person name="Chain P."/>
            <person name="Malfatti S."/>
            <person name="Shin M."/>
            <person name="Vergez L."/>
            <person name="Schmutz J."/>
            <person name="Larimer F."/>
            <person name="Land M."/>
            <person name="Hauser L."/>
            <person name="Kyrpides N."/>
            <person name="Kim E."/>
            <person name="Taghavi S."/>
            <person name="Newman L."/>
            <person name="Vangronsveld J."/>
            <person name="van der Lelie D."/>
            <person name="Richardson P."/>
        </authorList>
    </citation>
    <scope>NUCLEOTIDE SEQUENCE [LARGE SCALE GENOMIC DNA]</scope>
    <source>
        <strain>568</strain>
    </source>
</reference>
<feature type="chain" id="PRO_1000061427" description="UPF0235 protein Spro_4033">
    <location>
        <begin position="1"/>
        <end position="96"/>
    </location>
</feature>
<sequence length="96" mass="10382">MSAVTPVLDGLAIRLYIQPKASRDQIVGLHGDELKVAITAPPVDGQANAHLIKFLAKQFKVAKGNVTIEKGELGRHKQLRIVNPQQIPDVVAALIE</sequence>
<evidence type="ECO:0000255" key="1">
    <source>
        <dbReference type="HAMAP-Rule" id="MF_00634"/>
    </source>
</evidence>
<dbReference type="EMBL" id="CP000826">
    <property type="protein sequence ID" value="ABV43128.1"/>
    <property type="molecule type" value="Genomic_DNA"/>
</dbReference>
<dbReference type="SMR" id="A8GJ38"/>
<dbReference type="STRING" id="399741.Spro_4033"/>
<dbReference type="KEGG" id="spe:Spro_4033"/>
<dbReference type="eggNOG" id="COG1872">
    <property type="taxonomic scope" value="Bacteria"/>
</dbReference>
<dbReference type="HOGENOM" id="CLU_130694_5_0_6"/>
<dbReference type="OrthoDB" id="9800587at2"/>
<dbReference type="GO" id="GO:0005737">
    <property type="term" value="C:cytoplasm"/>
    <property type="evidence" value="ECO:0007669"/>
    <property type="project" value="TreeGrafter"/>
</dbReference>
<dbReference type="Gene3D" id="3.30.1200.10">
    <property type="entry name" value="YggU-like"/>
    <property type="match status" value="1"/>
</dbReference>
<dbReference type="HAMAP" id="MF_00634">
    <property type="entry name" value="UPF0235"/>
    <property type="match status" value="1"/>
</dbReference>
<dbReference type="InterPro" id="IPR003746">
    <property type="entry name" value="DUF167"/>
</dbReference>
<dbReference type="InterPro" id="IPR036591">
    <property type="entry name" value="YggU-like_sf"/>
</dbReference>
<dbReference type="NCBIfam" id="TIGR00251">
    <property type="entry name" value="DUF167 family protein"/>
    <property type="match status" value="1"/>
</dbReference>
<dbReference type="NCBIfam" id="NF003466">
    <property type="entry name" value="PRK05090.1"/>
    <property type="match status" value="1"/>
</dbReference>
<dbReference type="PANTHER" id="PTHR13420">
    <property type="entry name" value="UPF0235 PROTEIN C15ORF40"/>
    <property type="match status" value="1"/>
</dbReference>
<dbReference type="PANTHER" id="PTHR13420:SF7">
    <property type="entry name" value="UPF0235 PROTEIN C15ORF40"/>
    <property type="match status" value="1"/>
</dbReference>
<dbReference type="Pfam" id="PF02594">
    <property type="entry name" value="DUF167"/>
    <property type="match status" value="1"/>
</dbReference>
<dbReference type="SMART" id="SM01152">
    <property type="entry name" value="DUF167"/>
    <property type="match status" value="1"/>
</dbReference>
<dbReference type="SUPFAM" id="SSF69786">
    <property type="entry name" value="YggU-like"/>
    <property type="match status" value="1"/>
</dbReference>
<organism>
    <name type="scientific">Serratia proteamaculans (strain 568)</name>
    <dbReference type="NCBI Taxonomy" id="399741"/>
    <lineage>
        <taxon>Bacteria</taxon>
        <taxon>Pseudomonadati</taxon>
        <taxon>Pseudomonadota</taxon>
        <taxon>Gammaproteobacteria</taxon>
        <taxon>Enterobacterales</taxon>
        <taxon>Yersiniaceae</taxon>
        <taxon>Serratia</taxon>
    </lineage>
</organism>
<accession>A8GJ38</accession>
<gene>
    <name type="ordered locus">Spro_4033</name>
</gene>